<gene>
    <name type="primary">Frmd4b</name>
</gene>
<name>FRM4B_MOUSE</name>
<feature type="chain" id="PRO_0000219447" description="FERM domain-containing protein 4B">
    <location>
        <begin position="1"/>
        <end position="1035"/>
    </location>
</feature>
<feature type="domain" description="FERM" evidence="3">
    <location>
        <begin position="59"/>
        <end position="361"/>
    </location>
</feature>
<feature type="region of interest" description="Necessary for adherens junction and tight junction localization" evidence="6">
    <location>
        <begin position="542"/>
        <end position="972"/>
    </location>
</feature>
<feature type="region of interest" description="Disordered" evidence="4">
    <location>
        <begin position="563"/>
        <end position="615"/>
    </location>
</feature>
<feature type="region of interest" description="Disordered" evidence="4">
    <location>
        <begin position="631"/>
        <end position="699"/>
    </location>
</feature>
<feature type="region of interest" description="Disordered" evidence="4">
    <location>
        <begin position="713"/>
        <end position="738"/>
    </location>
</feature>
<feature type="region of interest" description="Disordered" evidence="4">
    <location>
        <begin position="754"/>
        <end position="798"/>
    </location>
</feature>
<feature type="region of interest" description="Disordered" evidence="4">
    <location>
        <begin position="906"/>
        <end position="926"/>
    </location>
</feature>
<feature type="region of interest" description="Disordered" evidence="4">
    <location>
        <begin position="939"/>
        <end position="958"/>
    </location>
</feature>
<feature type="region of interest" description="Disordered" evidence="4">
    <location>
        <begin position="994"/>
        <end position="1035"/>
    </location>
</feature>
<feature type="coiled-coil region" evidence="2">
    <location>
        <begin position="414"/>
        <end position="451"/>
    </location>
</feature>
<feature type="coiled-coil region" evidence="2">
    <location>
        <begin position="535"/>
        <end position="559"/>
    </location>
</feature>
<feature type="compositionally biased region" description="Low complexity" evidence="4">
    <location>
        <begin position="571"/>
        <end position="590"/>
    </location>
</feature>
<feature type="compositionally biased region" description="Polar residues" evidence="4">
    <location>
        <begin position="594"/>
        <end position="607"/>
    </location>
</feature>
<feature type="compositionally biased region" description="Basic and acidic residues" evidence="4">
    <location>
        <begin position="635"/>
        <end position="644"/>
    </location>
</feature>
<feature type="compositionally biased region" description="Polar residues" evidence="4">
    <location>
        <begin position="664"/>
        <end position="699"/>
    </location>
</feature>
<feature type="compositionally biased region" description="Polar residues" evidence="4">
    <location>
        <begin position="715"/>
        <end position="725"/>
    </location>
</feature>
<feature type="compositionally biased region" description="Basic residues" evidence="4">
    <location>
        <begin position="762"/>
        <end position="771"/>
    </location>
</feature>
<feature type="compositionally biased region" description="Polar residues" evidence="4">
    <location>
        <begin position="772"/>
        <end position="782"/>
    </location>
</feature>
<feature type="compositionally biased region" description="Polar residues" evidence="4">
    <location>
        <begin position="907"/>
        <end position="921"/>
    </location>
</feature>
<feature type="compositionally biased region" description="Low complexity" evidence="4">
    <location>
        <begin position="941"/>
        <end position="958"/>
    </location>
</feature>
<feature type="compositionally biased region" description="Basic and acidic residues" evidence="4">
    <location>
        <begin position="1019"/>
        <end position="1035"/>
    </location>
</feature>
<feature type="modified residue" description="Phosphoserine" evidence="11 12">
    <location>
        <position position="372"/>
    </location>
</feature>
<feature type="modified residue" description="Phosphoserine" evidence="1">
    <location>
        <position position="609"/>
    </location>
</feature>
<feature type="modified residue" description="Phosphoserine" evidence="12">
    <location>
        <position position="698"/>
    </location>
</feature>
<feature type="modified residue" description="Phosphoserine" evidence="1">
    <location>
        <position position="916"/>
    </location>
</feature>
<feature type="cross-link" description="Glycyl lysine isopeptide (Lys-Gly) (interchain with G-Cter in SUMO2)" evidence="1">
    <location>
        <position position="883"/>
    </location>
</feature>
<feature type="cross-link" description="Glycyl lysine isopeptide (Lys-Gly) (interchain with G-Cter in SUMO2)" evidence="1">
    <location>
        <position position="1030"/>
    </location>
</feature>
<feature type="splice variant" id="VSP_040896" description="In isoform 2." evidence="7 8 9">
    <location>
        <begin position="1"/>
        <end position="54"/>
    </location>
</feature>
<feature type="sequence conflict" description="In Ref. 2; BAB17031." evidence="10" ref="2">
    <original>Q</original>
    <variation>R</variation>
    <location>
        <position position="62"/>
    </location>
</feature>
<feature type="sequence conflict" description="In Ref. 3; BAE21079." evidence="10" ref="3">
    <original>D</original>
    <variation>G</variation>
    <location>
        <position position="224"/>
    </location>
</feature>
<feature type="sequence conflict" description="In Ref. 2; BAB17031." evidence="10" ref="2">
    <original>P</original>
    <variation>S</variation>
    <location>
        <position position="802"/>
    </location>
</feature>
<feature type="sequence conflict" description="In Ref. 2; BAB17031." evidence="10" ref="2">
    <original>PQ</original>
    <variation>TK</variation>
    <location>
        <begin position="917"/>
        <end position="918"/>
    </location>
</feature>
<feature type="sequence conflict" description="In Ref. 2; BAB17031." evidence="10" ref="2">
    <original>S</original>
    <variation>N</variation>
    <location>
        <position position="986"/>
    </location>
</feature>
<evidence type="ECO:0000250" key="1">
    <source>
        <dbReference type="UniProtKB" id="Q9Y2L6"/>
    </source>
</evidence>
<evidence type="ECO:0000255" key="2"/>
<evidence type="ECO:0000255" key="3">
    <source>
        <dbReference type="PROSITE-ProRule" id="PRU00084"/>
    </source>
</evidence>
<evidence type="ECO:0000256" key="4">
    <source>
        <dbReference type="SAM" id="MobiDB-lite"/>
    </source>
</evidence>
<evidence type="ECO:0000269" key="5">
    <source>
    </source>
</evidence>
<evidence type="ECO:0000269" key="6">
    <source>
    </source>
</evidence>
<evidence type="ECO:0000303" key="7">
    <source>
    </source>
</evidence>
<evidence type="ECO:0000303" key="8">
    <source>
    </source>
</evidence>
<evidence type="ECO:0000303" key="9">
    <source ref="2"/>
</evidence>
<evidence type="ECO:0000305" key="10"/>
<evidence type="ECO:0007744" key="11">
    <source>
    </source>
</evidence>
<evidence type="ECO:0007744" key="12">
    <source>
    </source>
</evidence>
<protein>
    <recommendedName>
        <fullName>FERM domain-containing protein 4B</fullName>
    </recommendedName>
    <alternativeName>
        <fullName>GRP1-binding protein GRSP1</fullName>
    </alternativeName>
    <alternativeName>
        <fullName>Golgi-associated band 4.1-like protein</fullName>
        <shortName>GOBLIN</shortName>
    </alternativeName>
</protein>
<organism>
    <name type="scientific">Mus musculus</name>
    <name type="common">Mouse</name>
    <dbReference type="NCBI Taxonomy" id="10090"/>
    <lineage>
        <taxon>Eukaryota</taxon>
        <taxon>Metazoa</taxon>
        <taxon>Chordata</taxon>
        <taxon>Craniata</taxon>
        <taxon>Vertebrata</taxon>
        <taxon>Euteleostomi</taxon>
        <taxon>Mammalia</taxon>
        <taxon>Eutheria</taxon>
        <taxon>Euarchontoglires</taxon>
        <taxon>Glires</taxon>
        <taxon>Rodentia</taxon>
        <taxon>Myomorpha</taxon>
        <taxon>Muroidea</taxon>
        <taxon>Muridae</taxon>
        <taxon>Murinae</taxon>
        <taxon>Mus</taxon>
        <taxon>Mus</taxon>
    </lineage>
</organism>
<keyword id="KW-0025">Alternative splicing</keyword>
<keyword id="KW-0965">Cell junction</keyword>
<keyword id="KW-0175">Coiled coil</keyword>
<keyword id="KW-0963">Cytoplasm</keyword>
<keyword id="KW-0206">Cytoskeleton</keyword>
<keyword id="KW-1017">Isopeptide bond</keyword>
<keyword id="KW-0597">Phosphoprotein</keyword>
<keyword id="KW-1185">Reference proteome</keyword>
<keyword id="KW-0796">Tight junction</keyword>
<keyword id="KW-0832">Ubl conjugation</keyword>
<dbReference type="EMBL" id="AF327856">
    <property type="protein sequence ID" value="AAL26916.1"/>
    <property type="status" value="ALT_INIT"/>
    <property type="molecule type" value="mRNA"/>
</dbReference>
<dbReference type="EMBL" id="AF327857">
    <property type="protein sequence ID" value="AAL26917.1"/>
    <property type="molecule type" value="mRNA"/>
</dbReference>
<dbReference type="EMBL" id="AB042027">
    <property type="protein sequence ID" value="BAB17031.1"/>
    <property type="molecule type" value="mRNA"/>
</dbReference>
<dbReference type="EMBL" id="AK132280">
    <property type="protein sequence ID" value="BAE21079.1"/>
    <property type="molecule type" value="mRNA"/>
</dbReference>
<dbReference type="EMBL" id="BC052390">
    <property type="protein sequence ID" value="AAH52390.1"/>
    <property type="molecule type" value="mRNA"/>
</dbReference>
<dbReference type="CCDS" id="CCDS39577.1">
    <molecule id="Q920B0-2"/>
</dbReference>
<dbReference type="CCDS" id="CCDS85102.1">
    <molecule id="Q920B0-1"/>
</dbReference>
<dbReference type="RefSeq" id="NP_001333566.1">
    <molecule id="Q920B0-1"/>
    <property type="nucleotide sequence ID" value="NM_001346637.1"/>
</dbReference>
<dbReference type="RefSeq" id="NP_001333568.1">
    <property type="nucleotide sequence ID" value="NM_001346639.1"/>
</dbReference>
<dbReference type="RefSeq" id="NP_660130.2">
    <molecule id="Q920B0-2"/>
    <property type="nucleotide sequence ID" value="NM_145148.2"/>
</dbReference>
<dbReference type="RefSeq" id="XP_017177026.1">
    <molecule id="Q920B0-2"/>
    <property type="nucleotide sequence ID" value="XM_017321537.2"/>
</dbReference>
<dbReference type="RefSeq" id="XP_030111210.1">
    <molecule id="Q920B0-2"/>
    <property type="nucleotide sequence ID" value="XM_030255350.1"/>
</dbReference>
<dbReference type="SMR" id="Q920B0"/>
<dbReference type="BioGRID" id="231236">
    <property type="interactions" value="3"/>
</dbReference>
<dbReference type="FunCoup" id="Q920B0">
    <property type="interactions" value="255"/>
</dbReference>
<dbReference type="STRING" id="10090.ENSMUSP00000032146"/>
<dbReference type="GlyGen" id="Q920B0">
    <property type="glycosylation" value="1 site"/>
</dbReference>
<dbReference type="iPTMnet" id="Q920B0"/>
<dbReference type="PhosphoSitePlus" id="Q920B0"/>
<dbReference type="PaxDb" id="10090-ENSMUSP00000108982"/>
<dbReference type="ProteomicsDB" id="267627">
    <molecule id="Q920B0-1"/>
</dbReference>
<dbReference type="ProteomicsDB" id="267628">
    <molecule id="Q920B0-2"/>
</dbReference>
<dbReference type="Antibodypedia" id="2768">
    <property type="antibodies" value="39 antibodies from 8 providers"/>
</dbReference>
<dbReference type="DNASU" id="232288"/>
<dbReference type="Ensembl" id="ENSMUST00000032146.14">
    <molecule id="Q920B0-1"/>
    <property type="protein sequence ID" value="ENSMUSP00000032146.8"/>
    <property type="gene ID" value="ENSMUSG00000030064.17"/>
</dbReference>
<dbReference type="Ensembl" id="ENSMUST00000113355.9">
    <molecule id="Q920B0-2"/>
    <property type="protein sequence ID" value="ENSMUSP00000108982.3"/>
    <property type="gene ID" value="ENSMUSG00000030064.17"/>
</dbReference>
<dbReference type="GeneID" id="232288"/>
<dbReference type="KEGG" id="mmu:232288"/>
<dbReference type="UCSC" id="uc009dat.1">
    <molecule id="Q920B0-1"/>
    <property type="organism name" value="mouse"/>
</dbReference>
<dbReference type="AGR" id="MGI:2141794"/>
<dbReference type="CTD" id="23150"/>
<dbReference type="MGI" id="MGI:2141794">
    <property type="gene designation" value="Frmd4b"/>
</dbReference>
<dbReference type="VEuPathDB" id="HostDB:ENSMUSG00000030064"/>
<dbReference type="eggNOG" id="KOG3529">
    <property type="taxonomic scope" value="Eukaryota"/>
</dbReference>
<dbReference type="GeneTree" id="ENSGT01020000230354"/>
<dbReference type="HOGENOM" id="CLU_003623_2_0_1"/>
<dbReference type="InParanoid" id="Q920B0"/>
<dbReference type="OrthoDB" id="10063592at2759"/>
<dbReference type="PhylomeDB" id="Q920B0"/>
<dbReference type="TreeFam" id="TF328984"/>
<dbReference type="BioGRID-ORCS" id="232288">
    <property type="hits" value="1 hit in 60 CRISPR screens"/>
</dbReference>
<dbReference type="ChiTaRS" id="Frmd4b">
    <property type="organism name" value="mouse"/>
</dbReference>
<dbReference type="PRO" id="PR:Q920B0"/>
<dbReference type="Proteomes" id="UP000000589">
    <property type="component" value="Chromosome 6"/>
</dbReference>
<dbReference type="RNAct" id="Q920B0">
    <property type="molecule type" value="protein"/>
</dbReference>
<dbReference type="Bgee" id="ENSMUSG00000030064">
    <property type="expression patterns" value="Expressed in indifferent gonad and 248 other cell types or tissues"/>
</dbReference>
<dbReference type="ExpressionAtlas" id="Q920B0">
    <property type="expression patterns" value="baseline and differential"/>
</dbReference>
<dbReference type="GO" id="GO:0005912">
    <property type="term" value="C:adherens junction"/>
    <property type="evidence" value="ECO:0000314"/>
    <property type="project" value="UniProtKB"/>
</dbReference>
<dbReference type="GO" id="GO:0005923">
    <property type="term" value="C:bicellular tight junction"/>
    <property type="evidence" value="ECO:0000314"/>
    <property type="project" value="UniProtKB"/>
</dbReference>
<dbReference type="GO" id="GO:0005737">
    <property type="term" value="C:cytoplasm"/>
    <property type="evidence" value="ECO:0000314"/>
    <property type="project" value="MGI"/>
</dbReference>
<dbReference type="GO" id="GO:0005856">
    <property type="term" value="C:cytoskeleton"/>
    <property type="evidence" value="ECO:0007669"/>
    <property type="project" value="UniProtKB-SubCell"/>
</dbReference>
<dbReference type="GO" id="GO:0001726">
    <property type="term" value="C:ruffle"/>
    <property type="evidence" value="ECO:0000353"/>
    <property type="project" value="MGI"/>
</dbReference>
<dbReference type="GO" id="GO:0090162">
    <property type="term" value="P:establishment of epithelial cell polarity"/>
    <property type="evidence" value="ECO:0000316"/>
    <property type="project" value="MGI"/>
</dbReference>
<dbReference type="CDD" id="cd14473">
    <property type="entry name" value="FERM_B-lobe"/>
    <property type="match status" value="1"/>
</dbReference>
<dbReference type="CDD" id="cd13191">
    <property type="entry name" value="FERM_C_FRMD4A_FRMD4B"/>
    <property type="match status" value="1"/>
</dbReference>
<dbReference type="CDD" id="cd17200">
    <property type="entry name" value="FERM_F1_FRMD4B"/>
    <property type="match status" value="1"/>
</dbReference>
<dbReference type="FunFam" id="1.20.80.10:FF:000008">
    <property type="entry name" value="FERM domain containing 4A"/>
    <property type="match status" value="1"/>
</dbReference>
<dbReference type="FunFam" id="3.10.20.90:FF:000019">
    <property type="entry name" value="FERM domain containing 4A"/>
    <property type="match status" value="1"/>
</dbReference>
<dbReference type="FunFam" id="2.30.29.30:FF:000022">
    <property type="entry name" value="Putative FERM domain-containing protein 4A"/>
    <property type="match status" value="1"/>
</dbReference>
<dbReference type="Gene3D" id="1.20.80.10">
    <property type="match status" value="1"/>
</dbReference>
<dbReference type="Gene3D" id="3.10.20.90">
    <property type="entry name" value="Phosphatidylinositol 3-kinase Catalytic Subunit, Chain A, domain 1"/>
    <property type="match status" value="1"/>
</dbReference>
<dbReference type="Gene3D" id="2.30.29.30">
    <property type="entry name" value="Pleckstrin-homology domain (PH domain)/Phosphotyrosine-binding domain (PTB)"/>
    <property type="match status" value="1"/>
</dbReference>
<dbReference type="InterPro" id="IPR019749">
    <property type="entry name" value="Band_41_domain"/>
</dbReference>
<dbReference type="InterPro" id="IPR021774">
    <property type="entry name" value="CUPID"/>
</dbReference>
<dbReference type="InterPro" id="IPR014352">
    <property type="entry name" value="FERM/acyl-CoA-bd_prot_sf"/>
</dbReference>
<dbReference type="InterPro" id="IPR035963">
    <property type="entry name" value="FERM_2"/>
</dbReference>
<dbReference type="InterPro" id="IPR019748">
    <property type="entry name" value="FERM_central"/>
</dbReference>
<dbReference type="InterPro" id="IPR019747">
    <property type="entry name" value="FERM_CS"/>
</dbReference>
<dbReference type="InterPro" id="IPR000299">
    <property type="entry name" value="FERM_domain"/>
</dbReference>
<dbReference type="InterPro" id="IPR018979">
    <property type="entry name" value="FERM_N"/>
</dbReference>
<dbReference type="InterPro" id="IPR018980">
    <property type="entry name" value="FERM_PH-like_C"/>
</dbReference>
<dbReference type="InterPro" id="IPR047176">
    <property type="entry name" value="FRMD4A/B"/>
</dbReference>
<dbReference type="InterPro" id="IPR041785">
    <property type="entry name" value="FRMD4A/B_FERM_C"/>
</dbReference>
<dbReference type="InterPro" id="IPR011993">
    <property type="entry name" value="PH-like_dom_sf"/>
</dbReference>
<dbReference type="InterPro" id="IPR029071">
    <property type="entry name" value="Ubiquitin-like_domsf"/>
</dbReference>
<dbReference type="PANTHER" id="PTHR46079">
    <property type="entry name" value="FERM DOMAIN-CONTAINING PROTEIN 4"/>
    <property type="match status" value="1"/>
</dbReference>
<dbReference type="PANTHER" id="PTHR46079:SF1">
    <property type="entry name" value="FERM DOMAIN-CONTAINING PROTEIN 4B"/>
    <property type="match status" value="1"/>
</dbReference>
<dbReference type="Pfam" id="PF11819">
    <property type="entry name" value="CUPID"/>
    <property type="match status" value="1"/>
</dbReference>
<dbReference type="Pfam" id="PF09380">
    <property type="entry name" value="FERM_C"/>
    <property type="match status" value="1"/>
</dbReference>
<dbReference type="Pfam" id="PF00373">
    <property type="entry name" value="FERM_M"/>
    <property type="match status" value="1"/>
</dbReference>
<dbReference type="Pfam" id="PF09379">
    <property type="entry name" value="FERM_N"/>
    <property type="match status" value="1"/>
</dbReference>
<dbReference type="PRINTS" id="PR00935">
    <property type="entry name" value="BAND41"/>
</dbReference>
<dbReference type="SMART" id="SM00295">
    <property type="entry name" value="B41"/>
    <property type="match status" value="1"/>
</dbReference>
<dbReference type="SMART" id="SM01196">
    <property type="entry name" value="FERM_C"/>
    <property type="match status" value="1"/>
</dbReference>
<dbReference type="SUPFAM" id="SSF50729">
    <property type="entry name" value="PH domain-like"/>
    <property type="match status" value="1"/>
</dbReference>
<dbReference type="SUPFAM" id="SSF47031">
    <property type="entry name" value="Second domain of FERM"/>
    <property type="match status" value="1"/>
</dbReference>
<dbReference type="SUPFAM" id="SSF54236">
    <property type="entry name" value="Ubiquitin-like"/>
    <property type="match status" value="1"/>
</dbReference>
<dbReference type="PROSITE" id="PS00661">
    <property type="entry name" value="FERM_2"/>
    <property type="match status" value="1"/>
</dbReference>
<dbReference type="PROSITE" id="PS50057">
    <property type="entry name" value="FERM_3"/>
    <property type="match status" value="1"/>
</dbReference>
<proteinExistence type="evidence at protein level"/>
<reference key="1">
    <citation type="journal article" date="2001" name="J. Biol. Chem.">
        <title>Signaling complexes of the FERM domain-containing protein GRSP1 bound to ARF exchange factor GRP1.</title>
        <authorList>
            <person name="Klarlund J.K."/>
            <person name="Holik J."/>
            <person name="Chawla A."/>
            <person name="Park J.G."/>
            <person name="Buxton J."/>
            <person name="Czech M.P."/>
        </authorList>
    </citation>
    <scope>NUCLEOTIDE SEQUENCE [MRNA] (ISOFORM 1)</scope>
    <scope>NUCLEOTIDE SEQUENCE [MRNA] (ISOFORM 1/2)</scope>
    <scope>INTERACTION WITH CYTH3</scope>
    <scope>SUBCELLULAR LOCATION</scope>
    <scope>TISSUE SPECIFICITY</scope>
    <source>
        <tissue>Brain</tissue>
        <tissue>Lung</tissue>
    </source>
</reference>
<reference key="2">
    <citation type="submission" date="2000-04" db="EMBL/GenBank/DDBJ databases">
        <title>Mus musculus mRNA for Golgi-associated band 4.1-like protein, Goblin, complete cds.</title>
        <authorList>
            <person name="Watanabe N.M."/>
            <person name="Kusumi A."/>
            <person name="Dan I."/>
        </authorList>
    </citation>
    <scope>NUCLEOTIDE SEQUENCE [MRNA] (ISOFORM 2)</scope>
    <source>
        <strain>ICR</strain>
        <tissue>Brain</tissue>
    </source>
</reference>
<reference key="3">
    <citation type="journal article" date="2005" name="Science">
        <title>The transcriptional landscape of the mammalian genome.</title>
        <authorList>
            <person name="Carninci P."/>
            <person name="Kasukawa T."/>
            <person name="Katayama S."/>
            <person name="Gough J."/>
            <person name="Frith M.C."/>
            <person name="Maeda N."/>
            <person name="Oyama R."/>
            <person name="Ravasi T."/>
            <person name="Lenhard B."/>
            <person name="Wells C."/>
            <person name="Kodzius R."/>
            <person name="Shimokawa K."/>
            <person name="Bajic V.B."/>
            <person name="Brenner S.E."/>
            <person name="Batalov S."/>
            <person name="Forrest A.R."/>
            <person name="Zavolan M."/>
            <person name="Davis M.J."/>
            <person name="Wilming L.G."/>
            <person name="Aidinis V."/>
            <person name="Allen J.E."/>
            <person name="Ambesi-Impiombato A."/>
            <person name="Apweiler R."/>
            <person name="Aturaliya R.N."/>
            <person name="Bailey T.L."/>
            <person name="Bansal M."/>
            <person name="Baxter L."/>
            <person name="Beisel K.W."/>
            <person name="Bersano T."/>
            <person name="Bono H."/>
            <person name="Chalk A.M."/>
            <person name="Chiu K.P."/>
            <person name="Choudhary V."/>
            <person name="Christoffels A."/>
            <person name="Clutterbuck D.R."/>
            <person name="Crowe M.L."/>
            <person name="Dalla E."/>
            <person name="Dalrymple B.P."/>
            <person name="de Bono B."/>
            <person name="Della Gatta G."/>
            <person name="di Bernardo D."/>
            <person name="Down T."/>
            <person name="Engstrom P."/>
            <person name="Fagiolini M."/>
            <person name="Faulkner G."/>
            <person name="Fletcher C.F."/>
            <person name="Fukushima T."/>
            <person name="Furuno M."/>
            <person name="Futaki S."/>
            <person name="Gariboldi M."/>
            <person name="Georgii-Hemming P."/>
            <person name="Gingeras T.R."/>
            <person name="Gojobori T."/>
            <person name="Green R.E."/>
            <person name="Gustincich S."/>
            <person name="Harbers M."/>
            <person name="Hayashi Y."/>
            <person name="Hensch T.K."/>
            <person name="Hirokawa N."/>
            <person name="Hill D."/>
            <person name="Huminiecki L."/>
            <person name="Iacono M."/>
            <person name="Ikeo K."/>
            <person name="Iwama A."/>
            <person name="Ishikawa T."/>
            <person name="Jakt M."/>
            <person name="Kanapin A."/>
            <person name="Katoh M."/>
            <person name="Kawasawa Y."/>
            <person name="Kelso J."/>
            <person name="Kitamura H."/>
            <person name="Kitano H."/>
            <person name="Kollias G."/>
            <person name="Krishnan S.P."/>
            <person name="Kruger A."/>
            <person name="Kummerfeld S.K."/>
            <person name="Kurochkin I.V."/>
            <person name="Lareau L.F."/>
            <person name="Lazarevic D."/>
            <person name="Lipovich L."/>
            <person name="Liu J."/>
            <person name="Liuni S."/>
            <person name="McWilliam S."/>
            <person name="Madan Babu M."/>
            <person name="Madera M."/>
            <person name="Marchionni L."/>
            <person name="Matsuda H."/>
            <person name="Matsuzawa S."/>
            <person name="Miki H."/>
            <person name="Mignone F."/>
            <person name="Miyake S."/>
            <person name="Morris K."/>
            <person name="Mottagui-Tabar S."/>
            <person name="Mulder N."/>
            <person name="Nakano N."/>
            <person name="Nakauchi H."/>
            <person name="Ng P."/>
            <person name="Nilsson R."/>
            <person name="Nishiguchi S."/>
            <person name="Nishikawa S."/>
            <person name="Nori F."/>
            <person name="Ohara O."/>
            <person name="Okazaki Y."/>
            <person name="Orlando V."/>
            <person name="Pang K.C."/>
            <person name="Pavan W.J."/>
            <person name="Pavesi G."/>
            <person name="Pesole G."/>
            <person name="Petrovsky N."/>
            <person name="Piazza S."/>
            <person name="Reed J."/>
            <person name="Reid J.F."/>
            <person name="Ring B.Z."/>
            <person name="Ringwald M."/>
            <person name="Rost B."/>
            <person name="Ruan Y."/>
            <person name="Salzberg S.L."/>
            <person name="Sandelin A."/>
            <person name="Schneider C."/>
            <person name="Schoenbach C."/>
            <person name="Sekiguchi K."/>
            <person name="Semple C.A."/>
            <person name="Seno S."/>
            <person name="Sessa L."/>
            <person name="Sheng Y."/>
            <person name="Shibata Y."/>
            <person name="Shimada H."/>
            <person name="Shimada K."/>
            <person name="Silva D."/>
            <person name="Sinclair B."/>
            <person name="Sperling S."/>
            <person name="Stupka E."/>
            <person name="Sugiura K."/>
            <person name="Sultana R."/>
            <person name="Takenaka Y."/>
            <person name="Taki K."/>
            <person name="Tammoja K."/>
            <person name="Tan S.L."/>
            <person name="Tang S."/>
            <person name="Taylor M.S."/>
            <person name="Tegner J."/>
            <person name="Teichmann S.A."/>
            <person name="Ueda H.R."/>
            <person name="van Nimwegen E."/>
            <person name="Verardo R."/>
            <person name="Wei C.L."/>
            <person name="Yagi K."/>
            <person name="Yamanishi H."/>
            <person name="Zabarovsky E."/>
            <person name="Zhu S."/>
            <person name="Zimmer A."/>
            <person name="Hide W."/>
            <person name="Bult C."/>
            <person name="Grimmond S.M."/>
            <person name="Teasdale R.D."/>
            <person name="Liu E.T."/>
            <person name="Brusic V."/>
            <person name="Quackenbush J."/>
            <person name="Wahlestedt C."/>
            <person name="Mattick J.S."/>
            <person name="Hume D.A."/>
            <person name="Kai C."/>
            <person name="Sasaki D."/>
            <person name="Tomaru Y."/>
            <person name="Fukuda S."/>
            <person name="Kanamori-Katayama M."/>
            <person name="Suzuki M."/>
            <person name="Aoki J."/>
            <person name="Arakawa T."/>
            <person name="Iida J."/>
            <person name="Imamura K."/>
            <person name="Itoh M."/>
            <person name="Kato T."/>
            <person name="Kawaji H."/>
            <person name="Kawagashira N."/>
            <person name="Kawashima T."/>
            <person name="Kojima M."/>
            <person name="Kondo S."/>
            <person name="Konno H."/>
            <person name="Nakano K."/>
            <person name="Ninomiya N."/>
            <person name="Nishio T."/>
            <person name="Okada M."/>
            <person name="Plessy C."/>
            <person name="Shibata K."/>
            <person name="Shiraki T."/>
            <person name="Suzuki S."/>
            <person name="Tagami M."/>
            <person name="Waki K."/>
            <person name="Watahiki A."/>
            <person name="Okamura-Oho Y."/>
            <person name="Suzuki H."/>
            <person name="Kawai J."/>
            <person name="Hayashizaki Y."/>
        </authorList>
    </citation>
    <scope>NUCLEOTIDE SEQUENCE [LARGE SCALE MRNA] (ISOFORM 2)</scope>
    <source>
        <strain>C57BL/6J</strain>
        <tissue>Placenta</tissue>
    </source>
</reference>
<reference key="4">
    <citation type="journal article" date="2004" name="Genome Res.">
        <title>The status, quality, and expansion of the NIH full-length cDNA project: the Mammalian Gene Collection (MGC).</title>
        <authorList>
            <consortium name="The MGC Project Team"/>
        </authorList>
    </citation>
    <scope>NUCLEOTIDE SEQUENCE [LARGE SCALE MRNA] (ISOFORM 2)</scope>
    <source>
        <strain>C57BL/6J</strain>
        <tissue>Embryonic brain</tissue>
    </source>
</reference>
<reference key="5">
    <citation type="journal article" date="2007" name="Proc. Natl. Acad. Sci. U.S.A.">
        <title>Large-scale phosphorylation analysis of mouse liver.</title>
        <authorList>
            <person name="Villen J."/>
            <person name="Beausoleil S.A."/>
            <person name="Gerber S.A."/>
            <person name="Gygi S.P."/>
        </authorList>
    </citation>
    <scope>PHOSPHORYLATION [LARGE SCALE ANALYSIS] AT SER-372</scope>
    <scope>IDENTIFICATION BY MASS SPECTROMETRY [LARGE SCALE ANALYSIS]</scope>
    <source>
        <tissue>Liver</tissue>
    </source>
</reference>
<reference key="6">
    <citation type="journal article" date="2010" name="Cell">
        <title>A tissue-specific atlas of mouse protein phosphorylation and expression.</title>
        <authorList>
            <person name="Huttlin E.L."/>
            <person name="Jedrychowski M.P."/>
            <person name="Elias J.E."/>
            <person name="Goswami T."/>
            <person name="Rad R."/>
            <person name="Beausoleil S.A."/>
            <person name="Villen J."/>
            <person name="Haas W."/>
            <person name="Sowa M.E."/>
            <person name="Gygi S.P."/>
        </authorList>
    </citation>
    <scope>PHOSPHORYLATION [LARGE SCALE ANALYSIS] AT SER-372 AND SER-698</scope>
    <scope>IDENTIFICATION BY MASS SPECTROMETRY [LARGE SCALE ANALYSIS]</scope>
    <source>
        <tissue>Brain</tissue>
        <tissue>Heart</tissue>
        <tissue>Kidney</tissue>
        <tissue>Liver</tissue>
        <tissue>Lung</tissue>
        <tissue>Pancreas</tissue>
        <tissue>Spleen</tissue>
    </source>
</reference>
<reference key="7">
    <citation type="journal article" date="2010" name="Proc. Natl. Acad. Sci. U.S.A.">
        <title>FRMD4A regulates epithelial polarity by connecting Arf6 activation with the PAR complex.</title>
        <authorList>
            <person name="Ikenouchi J."/>
            <person name="Umeda M."/>
        </authorList>
    </citation>
    <scope>SUBCELLULAR LOCATION</scope>
    <scope>INTERACTION WITH PARD3; CYTH3 AND CYTH1</scope>
    <scope>FUNCTION</scope>
</reference>
<sequence length="1035" mass="118007">MASVFMCGVEDLLFSGSRFVWNLTVSTLRRWYTERLRACHQVLRTWCGLRDVYQMTEGRHCQVHLLDDRRLELLVQPKLLSRELLDLVASHFNLKEKEYFGITFIDDTGQENWLQLDHRVLEHDLPKKPGPTLLHFAVRFYIESISFLKDKNTVELFFLNAKACVHKGQIEVDSETIFKLAALVLQESKGDYTSDENARKDLKTLPVFPTKTLQEHPSLAYCEDRVIEHYLKIKGLTRGQAVVQYMKIVEALPTYGVHYYAVKDKQGLPWWLGISYKGIGQYDLQDKVKPRKLFQWKQLENLYFREKKFAVEVHDPRRISVSRRTFGQSGLFVQTWYANSSLIKSIWVMAISQHQFYLDRKQSKAKIPSARSLDDIAMDLTETGTQRGSKLVTLEAKSQFIMASNGSLISSGSQDSEGMEEQKREKILELKKKEKLLQEKLLQKVEELKKICLREAELTGRMPKEYPLNIGEKPPQVRRRVGTTFKLDDNLLPTEEDPALQELESNFLIQQKLVEAAKKLASEPDLCKTVKKKRKQDYTDAVKRLQEIENSINEYRIRCGKKPSQKAAVVPPEDIIPSESSSLSDTTTYDDPNDSFTLAGQRPSSVPHSPRILPPKSLGIERIHFRKSSINEQFMDTRHSREMLSTHSSPYKTLERRPQGGRSMPTTPVLTRNAYSSSHLEPDSSSQHCRQRSGSLESQSHLLSEMDSDKPFFTLSKSQRSSSTEILDDGSSYTSQSSSEYYCVTPAASPYYTTQTLDTRARGRRRSKKHSVSTSNSGSMPNLAQKDPLRNGVYSKGQDPPPSGYYIAGYPPYAECDLYYSGGYVYENDTEGQYSVNPSYRSSAHYGYDRQRDYSRSFHEDEVDRVPHNPYATLRLPRKAAVKSEHITKNIHKALVAEHLRGWYQRASGQKDQGHSPQTSFDSDRGSQRCLGFAGLQVPCSPSSRASSYSSVSSTNASGNWRTQLTIGLSEYENPVHSPYTSYYGSIYNPLSSPSRQYAETTPLDGTDGSQLEDNLEGSEQRLFWHEDSKPGTLV</sequence>
<accession>Q920B0</accession>
<accession>Q3V1S1</accession>
<accession>Q920B1</accession>
<accession>Q9ESP9</accession>
<comment type="function">
    <text evidence="6">Member of GRP1 signaling complexes that are acutely recruited to plasma membrane ruffles in response to insulin receptor signaling. May function as a scaffolding protein that regulates epithelial cell polarity by connecting ARF6 activation with the PAR3 complex (PubMed:20080746). Plays a redundant role with FRMD4A in epithelial polarization (PubMed:20080746).</text>
</comment>
<comment type="subunit">
    <text evidence="5 6">Interacts with CYTH3 (PubMed:11445584, PubMed:20080746). Interacts with PARD3 (PubMed:20080746). Interacts with CYTH1.</text>
</comment>
<comment type="subcellular location">
    <subcellularLocation>
        <location evidence="5">Cytoplasm</location>
        <location evidence="5">Cytoskeleton</location>
    </subcellularLocation>
    <subcellularLocation>
        <location evidence="6">Cell junction</location>
        <location evidence="6">Tight junction</location>
    </subcellularLocation>
    <subcellularLocation>
        <location evidence="6">Cell junction</location>
        <location evidence="6">Adherens junction</location>
    </subcellularLocation>
    <text evidence="6">Colocalized with PARD3 at adherens junction and tight junction (PubMed:20080746).</text>
</comment>
<comment type="alternative products">
    <event type="alternative splicing"/>
    <isoform>
        <id>Q920B0-1</id>
        <name>1</name>
        <sequence type="displayed"/>
    </isoform>
    <isoform>
        <id>Q920B0-2</id>
        <name>2</name>
        <sequence type="described" ref="VSP_040896"/>
    </isoform>
</comment>
<comment type="tissue specificity">
    <text evidence="5">Isoform 1 is expressed in the brain. Isoform 2 is expressed in the lung (at protein level).</text>
</comment>
<comment type="sequence caution" evidence="10">
    <conflict type="erroneous initiation">
        <sequence resource="EMBL-CDS" id="AAL26916"/>
    </conflict>
    <text>Extended N-terminus.</text>
</comment>